<reference key="1">
    <citation type="submission" date="2018-10" db="EMBL/GenBank/DDBJ databases">
        <title>Genome sequence of Galleria mellonella, the greater wax moth.</title>
        <authorList>
            <person name="Calla B."/>
            <person name="Robertson H.M."/>
            <person name="Grozinger C.M."/>
            <person name="Robinson G.E."/>
            <person name="Dolezal A.G."/>
            <person name="Swale T."/>
            <person name="Shiue L."/>
            <person name="Berenbaum M.R."/>
        </authorList>
    </citation>
    <scope>NUCLEOTIDE SEQUENCE [GENOMIC DNA]</scope>
</reference>
<reference evidence="6" key="2">
    <citation type="journal article" date="2021" name="Molecules">
        <title>Fungal alpha-1,3-Glucan as a New Pathogen-Associated Molecular Pattern in the Insect Model Host Galleria mellonella.</title>
        <authorList>
            <person name="Staczek S."/>
            <person name="Zdybicka-Barabas A."/>
            <person name="Wojda I."/>
            <person name="Wiater A."/>
            <person name="Mak P."/>
            <person name="Suder P."/>
            <person name="Skrzypiec K."/>
            <person name="Cytrynska M."/>
        </authorList>
    </citation>
    <scope>PROTEIN SEQUENCE OF 36-55</scope>
    <scope>FUNCTION</scope>
    <scope>SUBCELLULAR LOCATION</scope>
    <scope>DEVELOPMENTAL STAGE</scope>
</reference>
<keyword id="KW-0903">Direct protein sequencing</keyword>
<keyword id="KW-1015">Disulfide bond</keyword>
<keyword id="KW-1185">Reference proteome</keyword>
<keyword id="KW-0964">Secreted</keyword>
<feature type="chain" id="PRO_0000455043" description="Phenoloxidase-activating factor 2">
    <location>
        <begin position="1" status="less than"/>
        <end position="303"/>
    </location>
</feature>
<feature type="domain" description="Peptidase S1" evidence="2">
    <location>
        <begin position="36"/>
        <end position="292"/>
    </location>
</feature>
<feature type="region of interest" description="Disordered" evidence="3">
    <location>
        <begin position="1"/>
        <end position="24"/>
    </location>
</feature>
<feature type="disulfide bond" evidence="2">
    <location>
        <begin position="173"/>
        <end position="247"/>
    </location>
</feature>
<feature type="disulfide bond" evidence="2">
    <location>
        <begin position="206"/>
        <end position="227"/>
    </location>
</feature>
<feature type="disulfide bond" evidence="2">
    <location>
        <begin position="237"/>
        <end position="268"/>
    </location>
</feature>
<feature type="non-terminal residue">
    <location>
        <position position="1"/>
    </location>
</feature>
<gene>
    <name type="primary">LOC113510063</name>
</gene>
<protein>
    <recommendedName>
        <fullName evidence="5">Phenoloxidase-activating factor 2</fullName>
        <shortName evidence="6">PFAF2</shortName>
    </recommendedName>
    <alternativeName>
        <fullName evidence="1">Prophenoloxidase-activating factor II</fullName>
    </alternativeName>
</protein>
<evidence type="ECO:0000250" key="1">
    <source>
        <dbReference type="UniProtKB" id="Q9GRW0"/>
    </source>
</evidence>
<evidence type="ECO:0000255" key="2">
    <source>
        <dbReference type="PROSITE-ProRule" id="PRU00274"/>
    </source>
</evidence>
<evidence type="ECO:0000256" key="3">
    <source>
        <dbReference type="SAM" id="MobiDB-lite"/>
    </source>
</evidence>
<evidence type="ECO:0000269" key="4">
    <source>
    </source>
</evidence>
<evidence type="ECO:0000303" key="5">
    <source>
    </source>
</evidence>
<evidence type="ECO:0000305" key="6"/>
<evidence type="ECO:0000312" key="7">
    <source>
        <dbReference type="Proteomes" id="UP000504614"/>
    </source>
</evidence>
<dbReference type="EMBL" id="RBWF02003166">
    <property type="status" value="NOT_ANNOTATED_CDS"/>
    <property type="molecule type" value="Genomic_DNA"/>
</dbReference>
<dbReference type="SMR" id="A0A6J1W8N1"/>
<dbReference type="EnsemblMetazoa" id="XM_026893479.1">
    <property type="protein sequence ID" value="XP_026749280.1"/>
    <property type="gene ID" value="LOC113510063"/>
</dbReference>
<dbReference type="InParanoid" id="A0A6J1W8N1"/>
<dbReference type="Proteomes" id="UP000504614">
    <property type="component" value="Unplaced"/>
</dbReference>
<dbReference type="GO" id="GO:0005576">
    <property type="term" value="C:extracellular region"/>
    <property type="evidence" value="ECO:0007669"/>
    <property type="project" value="UniProtKB-SubCell"/>
</dbReference>
<dbReference type="GO" id="GO:0004252">
    <property type="term" value="F:serine-type endopeptidase activity"/>
    <property type="evidence" value="ECO:0007669"/>
    <property type="project" value="InterPro"/>
</dbReference>
<dbReference type="GO" id="GO:0006508">
    <property type="term" value="P:proteolysis"/>
    <property type="evidence" value="ECO:0007669"/>
    <property type="project" value="InterPro"/>
</dbReference>
<dbReference type="CDD" id="cd00190">
    <property type="entry name" value="Tryp_SPc"/>
    <property type="match status" value="1"/>
</dbReference>
<dbReference type="FunFam" id="2.40.10.10:FF:000038">
    <property type="entry name" value="Serine protease"/>
    <property type="match status" value="1"/>
</dbReference>
<dbReference type="Gene3D" id="2.40.10.10">
    <property type="entry name" value="Trypsin-like serine proteases"/>
    <property type="match status" value="1"/>
</dbReference>
<dbReference type="InterPro" id="IPR009003">
    <property type="entry name" value="Peptidase_S1_PA"/>
</dbReference>
<dbReference type="InterPro" id="IPR043504">
    <property type="entry name" value="Peptidase_S1_PA_chymotrypsin"/>
</dbReference>
<dbReference type="InterPro" id="IPR001314">
    <property type="entry name" value="Peptidase_S1A"/>
</dbReference>
<dbReference type="InterPro" id="IPR001254">
    <property type="entry name" value="Trypsin_dom"/>
</dbReference>
<dbReference type="PANTHER" id="PTHR24258:SF129">
    <property type="entry name" value="LP15124P-RELATED"/>
    <property type="match status" value="1"/>
</dbReference>
<dbReference type="PANTHER" id="PTHR24258">
    <property type="entry name" value="SERINE PROTEASE-RELATED"/>
    <property type="match status" value="1"/>
</dbReference>
<dbReference type="Pfam" id="PF00089">
    <property type="entry name" value="Trypsin"/>
    <property type="match status" value="1"/>
</dbReference>
<dbReference type="PRINTS" id="PR00722">
    <property type="entry name" value="CHYMOTRYPSIN"/>
</dbReference>
<dbReference type="SMART" id="SM00020">
    <property type="entry name" value="Tryp_SPc"/>
    <property type="match status" value="1"/>
</dbReference>
<dbReference type="SUPFAM" id="SSF50494">
    <property type="entry name" value="Trypsin-like serine proteases"/>
    <property type="match status" value="1"/>
</dbReference>
<dbReference type="PROSITE" id="PS50240">
    <property type="entry name" value="TRYPSIN_DOM"/>
    <property type="match status" value="1"/>
</dbReference>
<name>PFAF2_GALME</name>
<accession>A0A6J1W8N1</accession>
<accession>C0HLY7</accession>
<comment type="function">
    <text evidence="1 4">Binds and activates processed prophenoloxidases PPO1 and PPO2 and thus is involved in the activation of the prophenoloxidase cascade probably following the recognition of pathogen-derived products (By similarity). Binds the A.niger cell wall component alpha-1,3-glucan, a fungal pathogen-associated molecular pattern (PAMP) that activates the host immune response (PubMed:34443685).</text>
</comment>
<comment type="subunit">
    <text evidence="1">Heterodimer.</text>
</comment>
<comment type="subcellular location">
    <subcellularLocation>
        <location evidence="4">Secreted</location>
    </subcellularLocation>
    <text evidence="4">Secreted in the hemolymph.</text>
</comment>
<comment type="developmental stage">
    <text evidence="4">Expressed in last instar larvae.</text>
</comment>
<comment type="similarity">
    <text evidence="2">Belongs to the peptidase S1 family.</text>
</comment>
<comment type="caution">
    <text evidence="6">Lacks the conserved Ser residue within the catalytic triad which is replaced by a Gly residue, probably resulting in a loss of proteolytic activity.</text>
</comment>
<organism evidence="7">
    <name type="scientific">Galleria mellonella</name>
    <name type="common">Greater wax moth</name>
    <dbReference type="NCBI Taxonomy" id="7137"/>
    <lineage>
        <taxon>Eukaryota</taxon>
        <taxon>Metazoa</taxon>
        <taxon>Ecdysozoa</taxon>
        <taxon>Arthropoda</taxon>
        <taxon>Hexapoda</taxon>
        <taxon>Insecta</taxon>
        <taxon>Pterygota</taxon>
        <taxon>Neoptera</taxon>
        <taxon>Endopterygota</taxon>
        <taxon>Lepidoptera</taxon>
        <taxon>Glossata</taxon>
        <taxon>Ditrysia</taxon>
        <taxon>Pyraloidea</taxon>
        <taxon>Pyralidae</taxon>
        <taxon>Galleriinae</taxon>
        <taxon>Galleria</taxon>
    </lineage>
</organism>
<sequence>PDRRPPEDPITPPPPTKEEQRAGCGWRNENGVGFRIIGDKDGEAKFGEFPWMVAILKIEPVNDQDPEGQKLNVYVGGGSLIHPQVVLTAAHYVATAKTLRVRAGEWDTQTTKEIYPYQDRDVTHKEIHKDFNKGNLFYDIALLFLSQPMEMAPNVGVVCLPPRNERAEAGTRCFASGWGKDKFGKEGRYQVILKKVEVPVVDRNTCQDQLRKTRLGRHFMLHSSFMCAGGEPGRDTCRGDGGSPLVCPIQYEKGRYVQSGIVAWGIGCGEDRTPGVYVDVGNLRDWIDDKVAGRGIEPTVYTY</sequence>
<proteinExistence type="evidence at protein level"/>